<name>YGZB_BACSU</name>
<accession>Q7WY74</accession>
<keyword id="KW-1003">Cell membrane</keyword>
<keyword id="KW-0472">Membrane</keyword>
<keyword id="KW-1185">Reference proteome</keyword>
<keyword id="KW-0812">Transmembrane</keyword>
<keyword id="KW-1133">Transmembrane helix</keyword>
<proteinExistence type="inferred from homology"/>
<gene>
    <name type="primary">ygzB</name>
    <name type="ordered locus">BSU08740</name>
</gene>
<dbReference type="EMBL" id="AL009126">
    <property type="protein sequence ID" value="CAE01450.1"/>
    <property type="molecule type" value="Genomic_DNA"/>
</dbReference>
<dbReference type="RefSeq" id="WP_003243536.1">
    <property type="nucleotide sequence ID" value="NZ_OZ025638.1"/>
</dbReference>
<dbReference type="RefSeq" id="YP_054575.1">
    <property type="nucleotide sequence ID" value="NC_000964.3"/>
</dbReference>
<dbReference type="SMR" id="Q7WY74"/>
<dbReference type="FunCoup" id="Q7WY74">
    <property type="interactions" value="61"/>
</dbReference>
<dbReference type="STRING" id="224308.BSU08740"/>
<dbReference type="PaxDb" id="224308-BSU08740"/>
<dbReference type="EnsemblBacteria" id="CAE01450">
    <property type="protein sequence ID" value="CAE01450"/>
    <property type="gene ID" value="BSU_08740"/>
</dbReference>
<dbReference type="GeneID" id="2914245"/>
<dbReference type="KEGG" id="bsu:BSU08740"/>
<dbReference type="PATRIC" id="fig|224308.179.peg.942"/>
<dbReference type="eggNOG" id="ENOG50313Y4">
    <property type="taxonomic scope" value="Bacteria"/>
</dbReference>
<dbReference type="InParanoid" id="Q7WY74"/>
<dbReference type="OrthoDB" id="1653848at2"/>
<dbReference type="BioCyc" id="BSUB:BSU08740-MONOMER"/>
<dbReference type="Proteomes" id="UP000001570">
    <property type="component" value="Chromosome"/>
</dbReference>
<dbReference type="GO" id="GO:0005886">
    <property type="term" value="C:plasma membrane"/>
    <property type="evidence" value="ECO:0007669"/>
    <property type="project" value="UniProtKB-SubCell"/>
</dbReference>
<dbReference type="HAMAP" id="MF_01502">
    <property type="entry name" value="UPF0295"/>
    <property type="match status" value="1"/>
</dbReference>
<dbReference type="InterPro" id="IPR020912">
    <property type="entry name" value="UPF0295"/>
</dbReference>
<dbReference type="NCBIfam" id="NF002796">
    <property type="entry name" value="PRK02935.1"/>
    <property type="match status" value="1"/>
</dbReference>
<dbReference type="Pfam" id="PF11023">
    <property type="entry name" value="DUF2614"/>
    <property type="match status" value="1"/>
</dbReference>
<feature type="chain" id="PRO_0000053855" description="UPF0295 protein YgzB">
    <location>
        <begin position="1"/>
        <end position="117"/>
    </location>
</feature>
<feature type="transmembrane region" description="Helical" evidence="1">
    <location>
        <begin position="13"/>
        <end position="33"/>
    </location>
</feature>
<feature type="transmembrane region" description="Helical" evidence="1">
    <location>
        <begin position="41"/>
        <end position="61"/>
    </location>
</feature>
<comment type="subcellular location">
    <subcellularLocation>
        <location evidence="2">Cell membrane</location>
        <topology evidence="2">Multi-pass membrane protein</topology>
    </subcellularLocation>
</comment>
<comment type="similarity">
    <text evidence="2">Belongs to the UPF0295 family.</text>
</comment>
<evidence type="ECO:0000255" key="1"/>
<evidence type="ECO:0000305" key="2"/>
<organism>
    <name type="scientific">Bacillus subtilis (strain 168)</name>
    <dbReference type="NCBI Taxonomy" id="224308"/>
    <lineage>
        <taxon>Bacteria</taxon>
        <taxon>Bacillati</taxon>
        <taxon>Bacillota</taxon>
        <taxon>Bacilli</taxon>
        <taxon>Bacillales</taxon>
        <taxon>Bacillaceae</taxon>
        <taxon>Bacillus</taxon>
    </lineage>
</organism>
<reference key="1">
    <citation type="journal article" date="1997" name="Nature">
        <title>The complete genome sequence of the Gram-positive bacterium Bacillus subtilis.</title>
        <authorList>
            <person name="Kunst F."/>
            <person name="Ogasawara N."/>
            <person name="Moszer I."/>
            <person name="Albertini A.M."/>
            <person name="Alloni G."/>
            <person name="Azevedo V."/>
            <person name="Bertero M.G."/>
            <person name="Bessieres P."/>
            <person name="Bolotin A."/>
            <person name="Borchert S."/>
            <person name="Borriss R."/>
            <person name="Boursier L."/>
            <person name="Brans A."/>
            <person name="Braun M."/>
            <person name="Brignell S.C."/>
            <person name="Bron S."/>
            <person name="Brouillet S."/>
            <person name="Bruschi C.V."/>
            <person name="Caldwell B."/>
            <person name="Capuano V."/>
            <person name="Carter N.M."/>
            <person name="Choi S.-K."/>
            <person name="Codani J.-J."/>
            <person name="Connerton I.F."/>
            <person name="Cummings N.J."/>
            <person name="Daniel R.A."/>
            <person name="Denizot F."/>
            <person name="Devine K.M."/>
            <person name="Duesterhoeft A."/>
            <person name="Ehrlich S.D."/>
            <person name="Emmerson P.T."/>
            <person name="Entian K.-D."/>
            <person name="Errington J."/>
            <person name="Fabret C."/>
            <person name="Ferrari E."/>
            <person name="Foulger D."/>
            <person name="Fritz C."/>
            <person name="Fujita M."/>
            <person name="Fujita Y."/>
            <person name="Fuma S."/>
            <person name="Galizzi A."/>
            <person name="Galleron N."/>
            <person name="Ghim S.-Y."/>
            <person name="Glaser P."/>
            <person name="Goffeau A."/>
            <person name="Golightly E.J."/>
            <person name="Grandi G."/>
            <person name="Guiseppi G."/>
            <person name="Guy B.J."/>
            <person name="Haga K."/>
            <person name="Haiech J."/>
            <person name="Harwood C.R."/>
            <person name="Henaut A."/>
            <person name="Hilbert H."/>
            <person name="Holsappel S."/>
            <person name="Hosono S."/>
            <person name="Hullo M.-F."/>
            <person name="Itaya M."/>
            <person name="Jones L.-M."/>
            <person name="Joris B."/>
            <person name="Karamata D."/>
            <person name="Kasahara Y."/>
            <person name="Klaerr-Blanchard M."/>
            <person name="Klein C."/>
            <person name="Kobayashi Y."/>
            <person name="Koetter P."/>
            <person name="Koningstein G."/>
            <person name="Krogh S."/>
            <person name="Kumano M."/>
            <person name="Kurita K."/>
            <person name="Lapidus A."/>
            <person name="Lardinois S."/>
            <person name="Lauber J."/>
            <person name="Lazarevic V."/>
            <person name="Lee S.-M."/>
            <person name="Levine A."/>
            <person name="Liu H."/>
            <person name="Masuda S."/>
            <person name="Mauel C."/>
            <person name="Medigue C."/>
            <person name="Medina N."/>
            <person name="Mellado R.P."/>
            <person name="Mizuno M."/>
            <person name="Moestl D."/>
            <person name="Nakai S."/>
            <person name="Noback M."/>
            <person name="Noone D."/>
            <person name="O'Reilly M."/>
            <person name="Ogawa K."/>
            <person name="Ogiwara A."/>
            <person name="Oudega B."/>
            <person name="Park S.-H."/>
            <person name="Parro V."/>
            <person name="Pohl T.M."/>
            <person name="Portetelle D."/>
            <person name="Porwollik S."/>
            <person name="Prescott A.M."/>
            <person name="Presecan E."/>
            <person name="Pujic P."/>
            <person name="Purnelle B."/>
            <person name="Rapoport G."/>
            <person name="Rey M."/>
            <person name="Reynolds S."/>
            <person name="Rieger M."/>
            <person name="Rivolta C."/>
            <person name="Rocha E."/>
            <person name="Roche B."/>
            <person name="Rose M."/>
            <person name="Sadaie Y."/>
            <person name="Sato T."/>
            <person name="Scanlan E."/>
            <person name="Schleich S."/>
            <person name="Schroeter R."/>
            <person name="Scoffone F."/>
            <person name="Sekiguchi J."/>
            <person name="Sekowska A."/>
            <person name="Seror S.J."/>
            <person name="Serror P."/>
            <person name="Shin B.-S."/>
            <person name="Soldo B."/>
            <person name="Sorokin A."/>
            <person name="Tacconi E."/>
            <person name="Takagi T."/>
            <person name="Takahashi H."/>
            <person name="Takemaru K."/>
            <person name="Takeuchi M."/>
            <person name="Tamakoshi A."/>
            <person name="Tanaka T."/>
            <person name="Terpstra P."/>
            <person name="Tognoni A."/>
            <person name="Tosato V."/>
            <person name="Uchiyama S."/>
            <person name="Vandenbol M."/>
            <person name="Vannier F."/>
            <person name="Vassarotti A."/>
            <person name="Viari A."/>
            <person name="Wambutt R."/>
            <person name="Wedler E."/>
            <person name="Wedler H."/>
            <person name="Weitzenegger T."/>
            <person name="Winters P."/>
            <person name="Wipat A."/>
            <person name="Yamamoto H."/>
            <person name="Yamane K."/>
            <person name="Yasumoto K."/>
            <person name="Yata K."/>
            <person name="Yoshida K."/>
            <person name="Yoshikawa H.-F."/>
            <person name="Zumstein E."/>
            <person name="Yoshikawa H."/>
            <person name="Danchin A."/>
        </authorList>
    </citation>
    <scope>NUCLEOTIDE SEQUENCE [LARGE SCALE GENOMIC DNA]</scope>
    <source>
        <strain>168</strain>
    </source>
</reference>
<sequence>MAKYSSKINKIRTFALSLVFVGFIIMYIGIFFKESVLLSSLFMILGLLSIGLSTVVYFWIGMLSTKAVRVICPGCDKETKVLGVVDMCMHCREPLTLDKGLEGKEFDESYNKKKMSK</sequence>
<protein>
    <recommendedName>
        <fullName>UPF0295 protein YgzB</fullName>
    </recommendedName>
</protein>